<feature type="transit peptide" description="Mitochondrion" evidence="2">
    <location>
        <begin position="1"/>
        <end position="13"/>
    </location>
</feature>
<feature type="chain" id="PRO_0000399580" description="Altered inheritance of mitochondria protein 24, mitochondrial">
    <location>
        <begin position="14"/>
        <end position="344"/>
    </location>
</feature>
<proteinExistence type="inferred from homology"/>
<name>AIM24_KLULA</name>
<reference key="1">
    <citation type="journal article" date="2004" name="Nature">
        <title>Genome evolution in yeasts.</title>
        <authorList>
            <person name="Dujon B."/>
            <person name="Sherman D."/>
            <person name="Fischer G."/>
            <person name="Durrens P."/>
            <person name="Casaregola S."/>
            <person name="Lafontaine I."/>
            <person name="de Montigny J."/>
            <person name="Marck C."/>
            <person name="Neuveglise C."/>
            <person name="Talla E."/>
            <person name="Goffard N."/>
            <person name="Frangeul L."/>
            <person name="Aigle M."/>
            <person name="Anthouard V."/>
            <person name="Babour A."/>
            <person name="Barbe V."/>
            <person name="Barnay S."/>
            <person name="Blanchin S."/>
            <person name="Beckerich J.-M."/>
            <person name="Beyne E."/>
            <person name="Bleykasten C."/>
            <person name="Boisrame A."/>
            <person name="Boyer J."/>
            <person name="Cattolico L."/>
            <person name="Confanioleri F."/>
            <person name="de Daruvar A."/>
            <person name="Despons L."/>
            <person name="Fabre E."/>
            <person name="Fairhead C."/>
            <person name="Ferry-Dumazet H."/>
            <person name="Groppi A."/>
            <person name="Hantraye F."/>
            <person name="Hennequin C."/>
            <person name="Jauniaux N."/>
            <person name="Joyet P."/>
            <person name="Kachouri R."/>
            <person name="Kerrest A."/>
            <person name="Koszul R."/>
            <person name="Lemaire M."/>
            <person name="Lesur I."/>
            <person name="Ma L."/>
            <person name="Muller H."/>
            <person name="Nicaud J.-M."/>
            <person name="Nikolski M."/>
            <person name="Oztas S."/>
            <person name="Ozier-Kalogeropoulos O."/>
            <person name="Pellenz S."/>
            <person name="Potier S."/>
            <person name="Richard G.-F."/>
            <person name="Straub M.-L."/>
            <person name="Suleau A."/>
            <person name="Swennen D."/>
            <person name="Tekaia F."/>
            <person name="Wesolowski-Louvel M."/>
            <person name="Westhof E."/>
            <person name="Wirth B."/>
            <person name="Zeniou-Meyer M."/>
            <person name="Zivanovic Y."/>
            <person name="Bolotin-Fukuhara M."/>
            <person name="Thierry A."/>
            <person name="Bouchier C."/>
            <person name="Caudron B."/>
            <person name="Scarpelli C."/>
            <person name="Gaillardin C."/>
            <person name="Weissenbach J."/>
            <person name="Wincker P."/>
            <person name="Souciet J.-L."/>
        </authorList>
    </citation>
    <scope>NUCLEOTIDE SEQUENCE [LARGE SCALE GENOMIC DNA]</scope>
    <source>
        <strain>ATCC 8585 / CBS 2359 / DSM 70799 / NBRC 1267 / NRRL Y-1140 / WM37</strain>
    </source>
</reference>
<sequence>MWRRSISILRPSPTTVIPSNVLSGSQLELKPLFDNHAETTREDGSNVTTTQFQLLGDNPTLASIQVSPSIPLYVRHNSIVSIHDSDRLSNVNVSYNKWFTFWPTLSLSRFDKLVGTNTFNCLVSSRKSSDTLSVLQLNGTQDWIVLNPKSVVSFEGNSSLSIQWFHKWLNYFRWISNKVTVLRSYGKLSGRGNVLLNGNGSVYKLELKSEDDQIILQKNRILAFNGLNKLDFKQAVTFEQTSKSLESDSQPETIHNNEDKIAFMKTVNTTLEFLKTRWHTMSNTDFVRVKGPRTVLVQTDAKSSAQTWPTSTLSLKPAKNYLSFAKIDNGSVNFKNTTSLLEKK</sequence>
<accession>Q6CPA5</accession>
<comment type="subcellular location">
    <subcellularLocation>
        <location evidence="1">Mitochondrion</location>
    </subcellularLocation>
</comment>
<comment type="similarity">
    <text evidence="3">Belongs to the AIM24 family.</text>
</comment>
<evidence type="ECO:0000250" key="1"/>
<evidence type="ECO:0000255" key="2"/>
<evidence type="ECO:0000305" key="3"/>
<keyword id="KW-0496">Mitochondrion</keyword>
<keyword id="KW-1185">Reference proteome</keyword>
<keyword id="KW-0809">Transit peptide</keyword>
<gene>
    <name type="primary">AIM24</name>
    <name type="ordered locus">KLLA0E06359g</name>
</gene>
<protein>
    <recommendedName>
        <fullName>Altered inheritance of mitochondria protein 24, mitochondrial</fullName>
    </recommendedName>
</protein>
<organism>
    <name type="scientific">Kluyveromyces lactis (strain ATCC 8585 / CBS 2359 / DSM 70799 / NBRC 1267 / NRRL Y-1140 / WM37)</name>
    <name type="common">Yeast</name>
    <name type="synonym">Candida sphaerica</name>
    <dbReference type="NCBI Taxonomy" id="284590"/>
    <lineage>
        <taxon>Eukaryota</taxon>
        <taxon>Fungi</taxon>
        <taxon>Dikarya</taxon>
        <taxon>Ascomycota</taxon>
        <taxon>Saccharomycotina</taxon>
        <taxon>Saccharomycetes</taxon>
        <taxon>Saccharomycetales</taxon>
        <taxon>Saccharomycetaceae</taxon>
        <taxon>Kluyveromyces</taxon>
    </lineage>
</organism>
<dbReference type="EMBL" id="CR382125">
    <property type="protein sequence ID" value="CAG99321.1"/>
    <property type="molecule type" value="Genomic_DNA"/>
</dbReference>
<dbReference type="RefSeq" id="XP_454234.1">
    <property type="nucleotide sequence ID" value="XM_454234.1"/>
</dbReference>
<dbReference type="FunCoup" id="Q6CPA5">
    <property type="interactions" value="18"/>
</dbReference>
<dbReference type="PaxDb" id="284590-Q6CPA5"/>
<dbReference type="KEGG" id="kla:KLLA0_E06359g"/>
<dbReference type="eggNOG" id="ENOG502RXC5">
    <property type="taxonomic scope" value="Eukaryota"/>
</dbReference>
<dbReference type="HOGENOM" id="CLU_057912_0_0_1"/>
<dbReference type="InParanoid" id="Q6CPA5"/>
<dbReference type="OMA" id="NGPYDLQ"/>
<dbReference type="Proteomes" id="UP000000598">
    <property type="component" value="Chromosome E"/>
</dbReference>
<dbReference type="GO" id="GO:0005743">
    <property type="term" value="C:mitochondrial inner membrane"/>
    <property type="evidence" value="ECO:0007669"/>
    <property type="project" value="TreeGrafter"/>
</dbReference>
<dbReference type="GO" id="GO:0007007">
    <property type="term" value="P:inner mitochondrial membrane organization"/>
    <property type="evidence" value="ECO:0007669"/>
    <property type="project" value="TreeGrafter"/>
</dbReference>
<dbReference type="Gene3D" id="3.60.160.10">
    <property type="entry name" value="Mitochondrial biogenesis AIM24"/>
    <property type="match status" value="1"/>
</dbReference>
<dbReference type="InterPro" id="IPR002838">
    <property type="entry name" value="AIM24"/>
</dbReference>
<dbReference type="InterPro" id="IPR036983">
    <property type="entry name" value="AIM24_sf"/>
</dbReference>
<dbReference type="InterPro" id="IPR016031">
    <property type="entry name" value="Trp_RNA-bd_attenuator-like_dom"/>
</dbReference>
<dbReference type="PANTHER" id="PTHR36959">
    <property type="entry name" value="ALTERED INHERITANCE OF MITOCHONDRIA PROTEIN 24, MITOCHONDRIAL"/>
    <property type="match status" value="1"/>
</dbReference>
<dbReference type="PANTHER" id="PTHR36959:SF2">
    <property type="entry name" value="ALTERED INHERITANCE OF MITOCHONDRIA PROTEIN 24, MITOCHONDRIAL"/>
    <property type="match status" value="1"/>
</dbReference>
<dbReference type="Pfam" id="PF01987">
    <property type="entry name" value="AIM24"/>
    <property type="match status" value="1"/>
</dbReference>
<dbReference type="SUPFAM" id="SSF51219">
    <property type="entry name" value="TRAP-like"/>
    <property type="match status" value="1"/>
</dbReference>